<comment type="function">
    <text evidence="6 7">Protein mannosyltransferase (PMT) involved in hyphal morphogenesis and drug sensitivity. Transfers mannose from Dol-P-mannose to Ser or Thr residues on proteins. PMT1, PMT2 and PMT4 account for most of the protein-O-glycosylation activity, while PMT5 and PMT6 may specifically modulate a much narrower spectrum of target proteins. Required for biofilm formation.</text>
</comment>
<comment type="catalytic activity">
    <reaction evidence="1 7">
        <text>a di-trans,poly-cis-dolichyl beta-D-mannosyl phosphate + L-seryl-[protein] = 3-O-(alpha-D-mannosyl)-L-seryl-[protein] + a di-trans,poly-cis-dolichyl phosphate + H(+)</text>
        <dbReference type="Rhea" id="RHEA:17377"/>
        <dbReference type="Rhea" id="RHEA-COMP:9863"/>
        <dbReference type="Rhea" id="RHEA-COMP:13546"/>
        <dbReference type="Rhea" id="RHEA-COMP:19498"/>
        <dbReference type="Rhea" id="RHEA-COMP:19501"/>
        <dbReference type="ChEBI" id="CHEBI:15378"/>
        <dbReference type="ChEBI" id="CHEBI:29999"/>
        <dbReference type="ChEBI" id="CHEBI:57683"/>
        <dbReference type="ChEBI" id="CHEBI:58211"/>
        <dbReference type="ChEBI" id="CHEBI:137321"/>
        <dbReference type="EC" id="2.4.1.109"/>
    </reaction>
</comment>
<comment type="catalytic activity">
    <reaction evidence="1 7">
        <text>a di-trans,poly-cis-dolichyl beta-D-mannosyl phosphate + L-threonyl-[protein] = 3-O-(alpha-D-mannosyl)-L-threonyl-[protein] + a di-trans,poly-cis-dolichyl phosphate + H(+)</text>
        <dbReference type="Rhea" id="RHEA:53396"/>
        <dbReference type="Rhea" id="RHEA-COMP:11060"/>
        <dbReference type="Rhea" id="RHEA-COMP:13547"/>
        <dbReference type="Rhea" id="RHEA-COMP:19498"/>
        <dbReference type="Rhea" id="RHEA-COMP:19501"/>
        <dbReference type="ChEBI" id="CHEBI:15378"/>
        <dbReference type="ChEBI" id="CHEBI:30013"/>
        <dbReference type="ChEBI" id="CHEBI:57683"/>
        <dbReference type="ChEBI" id="CHEBI:58211"/>
        <dbReference type="ChEBI" id="CHEBI:137323"/>
        <dbReference type="EC" id="2.4.1.109"/>
    </reaction>
</comment>
<comment type="pathway">
    <text evidence="8">Protein modification; protein glycosylation.</text>
</comment>
<comment type="subcellular location">
    <subcellularLocation>
        <location evidence="1">Endoplasmic reticulum membrane</location>
        <topology evidence="2">Multi-pass membrane protein</topology>
    </subcellularLocation>
</comment>
<comment type="induction">
    <text evidence="5">Expressed at very low levels.</text>
</comment>
<comment type="disruption phenotype">
    <text evidence="5 6">Shows altered cell wall composition with a significant decrease in wall mannoproteins, and reduced virulence in a mouse model of hematogenously disseminated candidiasis (HDC) and using reconstituted human epithelium (RHE).</text>
</comment>
<comment type="similarity">
    <text evidence="8">Belongs to the glycosyltransferase 39 family.</text>
</comment>
<sequence>MTKELPSGYFQGPFRPYKTFQPSLTERPLSKFEQFAVFSILLISLIRLYKLYIPDRVVFDEIHLIKYIKNYYDGSIFVDIHPPLGKLIYFYITKLFSFDKDFQIDIIGDLYPEDFPYLWLRLFSGICGIGHVLLTFFTLRITCNSVISIVITILICLENSMVTVSRLILLEGPSLFVQSLVIYNYKAFTTRIPFTGCWYFNLFVTGIALGLNISLKISGLFTFAWVGILTCVQLWEILGDLRISIWQFIKHLVLRVVAFIMVPLTIYCSVFYIHFENLPNEGPGSGFLTPHFRSTLDDYQQQPLQVLYGSTITIKHNALEKYLHSHDLTYPRGSNLQQVTLYDFPDVNNEWVIETKQKYNEEKLMTDQREVKDGDVVRLYHKATGHYLHVNDIRPPISEHEYSYEVNGNETRGLLGNEDYEFKIRMLVKKPHAENDLPLIKLRTTETIFQLIHQATRCNLMSHEQKLPDWGEYQNEVLCVKEPTIPNTLWYVESSSHPLLKDTKKLKTFPKFSFWSKLIETHKVMFNLNKGFTNPHPYASKPLDWPLLSRGIAFFSNYNLKSIDEESSLIYYLGNVAIYYSVFFVGLIAIFKCAIYSFIKLNPYASPPSSSKSSPYANFYNNSWPYLVGWFINYIPYCLMSRNLYLHHYLSALNFGILLLSQYLNYRVAKNKIIGGIITATIFVSAIYCFYEFIPITYGLPWTLDQCNSHKWFPNWDIDCMTYTG</sequence>
<name>PMT5_CANAL</name>
<protein>
    <recommendedName>
        <fullName evidence="8">Dolichyl-phosphate-mannose--protein mannosyltransferase 5</fullName>
        <shortName>Protein mannosyltransferase 5</shortName>
        <ecNumber evidence="1 7">2.4.1.109</ecNumber>
    </recommendedName>
</protein>
<reference key="1">
    <citation type="journal article" date="2004" name="Proc. Natl. Acad. Sci. U.S.A.">
        <title>The diploid genome sequence of Candida albicans.</title>
        <authorList>
            <person name="Jones T."/>
            <person name="Federspiel N.A."/>
            <person name="Chibana H."/>
            <person name="Dungan J."/>
            <person name="Kalman S."/>
            <person name="Magee B.B."/>
            <person name="Newport G."/>
            <person name="Thorstenson Y.R."/>
            <person name="Agabian N."/>
            <person name="Magee P.T."/>
            <person name="Davis R.W."/>
            <person name="Scherer S."/>
        </authorList>
    </citation>
    <scope>NUCLEOTIDE SEQUENCE [LARGE SCALE GENOMIC DNA]</scope>
    <source>
        <strain>SC5314 / ATCC MYA-2876</strain>
    </source>
</reference>
<reference key="2">
    <citation type="journal article" date="2007" name="Genome Biol.">
        <title>Assembly of the Candida albicans genome into sixteen supercontigs aligned on the eight chromosomes.</title>
        <authorList>
            <person name="van het Hoog M."/>
            <person name="Rast T.J."/>
            <person name="Martchenko M."/>
            <person name="Grindle S."/>
            <person name="Dignard D."/>
            <person name="Hogues H."/>
            <person name="Cuomo C."/>
            <person name="Berriman M."/>
            <person name="Scherer S."/>
            <person name="Magee B.B."/>
            <person name="Whiteway M."/>
            <person name="Chibana H."/>
            <person name="Nantel A."/>
            <person name="Magee P.T."/>
        </authorList>
    </citation>
    <scope>GENOME REANNOTATION</scope>
    <source>
        <strain>SC5314 / ATCC MYA-2876</strain>
    </source>
</reference>
<reference key="3">
    <citation type="journal article" date="2013" name="Genome Biol.">
        <title>Assembly of a phased diploid Candida albicans genome facilitates allele-specific measurements and provides a simple model for repeat and indel structure.</title>
        <authorList>
            <person name="Muzzey D."/>
            <person name="Schwartz K."/>
            <person name="Weissman J.S."/>
            <person name="Sherlock G."/>
        </authorList>
    </citation>
    <scope>NUCLEOTIDE SEQUENCE [LARGE SCALE GENOMIC DNA]</scope>
    <scope>GENOME REANNOTATION</scope>
    <source>
        <strain>SC5314 / ATCC MYA-2876</strain>
    </source>
</reference>
<reference key="4">
    <citation type="journal article" date="2005" name="Infect. Immun.">
        <title>Virulence of the fungal pathogen Candida albicans requires the five isoforms of protein mannosyltransferases.</title>
        <authorList>
            <person name="Rouabhia M."/>
            <person name="Schaller M."/>
            <person name="Corbucci C."/>
            <person name="Vecchiarelli A."/>
            <person name="Prill S.K."/>
            <person name="Giasson L."/>
            <person name="Ernst J.F."/>
        </authorList>
    </citation>
    <scope>DISRUPTION PHENOTYPE</scope>
    <scope>FUNCTION</scope>
</reference>
<reference key="5">
    <citation type="journal article" date="2005" name="Mol. Microbiol.">
        <title>PMT family of Candida albicans: five protein mannosyltransferase isoforms affect growth, morphogenesis and antifungal resistance.</title>
        <authorList>
            <person name="Prill S.K."/>
            <person name="Klinkert B."/>
            <person name="Timpel C."/>
            <person name="Gale C.A."/>
            <person name="Schroppel K."/>
            <person name="Ernst J.F."/>
        </authorList>
    </citation>
    <scope>IDENTIFICATION</scope>
    <scope>INDUCTION</scope>
    <scope>DISRUPTION PHENOTYPE</scope>
    <scope>FUNCTION</scope>
</reference>
<accession>Q5ACU3</accession>
<accession>A0A1D8PU16</accession>
<dbReference type="EC" id="2.4.1.109" evidence="1 7"/>
<dbReference type="EMBL" id="CP017630">
    <property type="protein sequence ID" value="AOW31634.1"/>
    <property type="molecule type" value="Genomic_DNA"/>
</dbReference>
<dbReference type="RefSeq" id="XP_719311.1">
    <property type="nucleotide sequence ID" value="XM_714218.1"/>
</dbReference>
<dbReference type="SMR" id="Q5ACU3"/>
<dbReference type="BioGRID" id="1222105">
    <property type="interactions" value="2"/>
</dbReference>
<dbReference type="STRING" id="237561.Q5ACU3"/>
<dbReference type="GlyCosmos" id="Q5ACU3">
    <property type="glycosylation" value="1 site, No reported glycans"/>
</dbReference>
<dbReference type="EnsemblFungi" id="CR_09770C_A-T">
    <property type="protein sequence ID" value="CR_09770C_A-T-p1"/>
    <property type="gene ID" value="CR_09770C_A"/>
</dbReference>
<dbReference type="GeneID" id="3639011"/>
<dbReference type="KEGG" id="cal:CAALFM_CR09770CA"/>
<dbReference type="CGD" id="CAL0000185574">
    <property type="gene designation" value="PMT5"/>
</dbReference>
<dbReference type="VEuPathDB" id="FungiDB:CR_09770C_A"/>
<dbReference type="eggNOG" id="KOG3359">
    <property type="taxonomic scope" value="Eukaryota"/>
</dbReference>
<dbReference type="HOGENOM" id="CLU_008438_2_1_1"/>
<dbReference type="InParanoid" id="Q5ACU3"/>
<dbReference type="OMA" id="IPNTLWY"/>
<dbReference type="OrthoDB" id="292747at2759"/>
<dbReference type="BRENDA" id="2.4.1.109">
    <property type="organism ID" value="1096"/>
</dbReference>
<dbReference type="UniPathway" id="UPA00378"/>
<dbReference type="PHI-base" id="PHI:453"/>
<dbReference type="Proteomes" id="UP000000559">
    <property type="component" value="Chromosome R"/>
</dbReference>
<dbReference type="GO" id="GO:0005783">
    <property type="term" value="C:endoplasmic reticulum"/>
    <property type="evidence" value="ECO:0000318"/>
    <property type="project" value="GO_Central"/>
</dbReference>
<dbReference type="GO" id="GO:0005789">
    <property type="term" value="C:endoplasmic reticulum membrane"/>
    <property type="evidence" value="ECO:0007669"/>
    <property type="project" value="UniProtKB-SubCell"/>
</dbReference>
<dbReference type="GO" id="GO:0005886">
    <property type="term" value="C:plasma membrane"/>
    <property type="evidence" value="ECO:0000314"/>
    <property type="project" value="CGD"/>
</dbReference>
<dbReference type="GO" id="GO:0004169">
    <property type="term" value="F:dolichyl-phosphate-mannose-protein mannosyltransferase activity"/>
    <property type="evidence" value="ECO:0000318"/>
    <property type="project" value="GO_Central"/>
</dbReference>
<dbReference type="GO" id="GO:0035269">
    <property type="term" value="P:protein O-linked mannosylation"/>
    <property type="evidence" value="ECO:0000318"/>
    <property type="project" value="GO_Central"/>
</dbReference>
<dbReference type="CDD" id="cd23286">
    <property type="entry name" value="beta-trefoil_MIR_PMT7-like"/>
    <property type="match status" value="1"/>
</dbReference>
<dbReference type="Gene3D" id="2.80.10.50">
    <property type="match status" value="1"/>
</dbReference>
<dbReference type="InterPro" id="IPR027005">
    <property type="entry name" value="GlyclTrfase_39-like"/>
</dbReference>
<dbReference type="InterPro" id="IPR003342">
    <property type="entry name" value="Glyco_trans_39/83"/>
</dbReference>
<dbReference type="InterPro" id="IPR036300">
    <property type="entry name" value="MIR_dom_sf"/>
</dbReference>
<dbReference type="InterPro" id="IPR016093">
    <property type="entry name" value="MIR_motif"/>
</dbReference>
<dbReference type="InterPro" id="IPR032421">
    <property type="entry name" value="PMT_4TMC"/>
</dbReference>
<dbReference type="PANTHER" id="PTHR10050">
    <property type="entry name" value="DOLICHYL-PHOSPHATE-MANNOSE--PROTEIN MANNOSYLTRANSFERASE"/>
    <property type="match status" value="1"/>
</dbReference>
<dbReference type="PANTHER" id="PTHR10050:SF50">
    <property type="entry name" value="DOLICHYL-PHOSPHATE-MANNOSE--PROTEIN MANNOSYLTRANSFERASE 1-RELATED"/>
    <property type="match status" value="1"/>
</dbReference>
<dbReference type="Pfam" id="PF02815">
    <property type="entry name" value="MIR"/>
    <property type="match status" value="1"/>
</dbReference>
<dbReference type="Pfam" id="PF02366">
    <property type="entry name" value="PMT"/>
    <property type="match status" value="1"/>
</dbReference>
<dbReference type="Pfam" id="PF16192">
    <property type="entry name" value="PMT_4TMC"/>
    <property type="match status" value="1"/>
</dbReference>
<dbReference type="SMART" id="SM00472">
    <property type="entry name" value="MIR"/>
    <property type="match status" value="3"/>
</dbReference>
<dbReference type="SUPFAM" id="SSF82109">
    <property type="entry name" value="MIR domain"/>
    <property type="match status" value="1"/>
</dbReference>
<dbReference type="PROSITE" id="PS50919">
    <property type="entry name" value="MIR"/>
    <property type="match status" value="3"/>
</dbReference>
<proteinExistence type="evidence at transcript level"/>
<organism>
    <name type="scientific">Candida albicans (strain SC5314 / ATCC MYA-2876)</name>
    <name type="common">Yeast</name>
    <dbReference type="NCBI Taxonomy" id="237561"/>
    <lineage>
        <taxon>Eukaryota</taxon>
        <taxon>Fungi</taxon>
        <taxon>Dikarya</taxon>
        <taxon>Ascomycota</taxon>
        <taxon>Saccharomycotina</taxon>
        <taxon>Pichiomycetes</taxon>
        <taxon>Debaryomycetaceae</taxon>
        <taxon>Candida/Lodderomyces clade</taxon>
        <taxon>Candida</taxon>
    </lineage>
</organism>
<feature type="chain" id="PRO_0000430575" description="Dolichyl-phosphate-mannose--protein mannosyltransferase 5">
    <location>
        <begin position="1"/>
        <end position="725"/>
    </location>
</feature>
<feature type="transmembrane region" description="Helical; Name=1" evidence="2">
    <location>
        <begin position="34"/>
        <end position="54"/>
    </location>
</feature>
<feature type="transmembrane region" description="Helical; Name=2" evidence="2">
    <location>
        <begin position="117"/>
        <end position="137"/>
    </location>
</feature>
<feature type="transmembrane region" description="Helical; Name=3" evidence="2">
    <location>
        <begin position="145"/>
        <end position="165"/>
    </location>
</feature>
<feature type="transmembrane region" description="Helical; Name=4" evidence="2">
    <location>
        <begin position="192"/>
        <end position="212"/>
    </location>
</feature>
<feature type="transmembrane region" description="Helical; Name=5" evidence="2">
    <location>
        <begin position="219"/>
        <end position="239"/>
    </location>
</feature>
<feature type="transmembrane region" description="Helical; Name=6" evidence="2">
    <location>
        <begin position="256"/>
        <end position="276"/>
    </location>
</feature>
<feature type="transmembrane region" description="Helical; Name=7" evidence="2">
    <location>
        <begin position="570"/>
        <end position="590"/>
    </location>
</feature>
<feature type="transmembrane region" description="Helical; Name=8" evidence="2">
    <location>
        <begin position="619"/>
        <end position="639"/>
    </location>
</feature>
<feature type="transmembrane region" description="Helical; Name=9" evidence="2">
    <location>
        <begin position="644"/>
        <end position="664"/>
    </location>
</feature>
<feature type="transmembrane region" description="Helical; Name=10" evidence="2">
    <location>
        <begin position="673"/>
        <end position="693"/>
    </location>
</feature>
<feature type="domain" description="MIR 1" evidence="3">
    <location>
        <begin position="303"/>
        <end position="356"/>
    </location>
</feature>
<feature type="domain" description="MIR 2" evidence="3">
    <location>
        <begin position="368"/>
        <end position="427"/>
    </location>
</feature>
<feature type="domain" description="MIR 3" evidence="3">
    <location>
        <begin position="439"/>
        <end position="495"/>
    </location>
</feature>
<feature type="glycosylation site" description="N-linked (GlcNAc...) asparagine" evidence="4">
    <location>
        <position position="409"/>
    </location>
</feature>
<evidence type="ECO:0000250" key="1">
    <source>
        <dbReference type="UniProtKB" id="P33775"/>
    </source>
</evidence>
<evidence type="ECO:0000255" key="2"/>
<evidence type="ECO:0000255" key="3">
    <source>
        <dbReference type="PROSITE-ProRule" id="PRU00131"/>
    </source>
</evidence>
<evidence type="ECO:0000255" key="4">
    <source>
        <dbReference type="PROSITE-ProRule" id="PRU00498"/>
    </source>
</evidence>
<evidence type="ECO:0000269" key="5">
    <source>
    </source>
</evidence>
<evidence type="ECO:0000269" key="6">
    <source>
    </source>
</evidence>
<evidence type="ECO:0000303" key="7">
    <source>
    </source>
</evidence>
<evidence type="ECO:0000305" key="8"/>
<keyword id="KW-0256">Endoplasmic reticulum</keyword>
<keyword id="KW-0325">Glycoprotein</keyword>
<keyword id="KW-0328">Glycosyltransferase</keyword>
<keyword id="KW-0472">Membrane</keyword>
<keyword id="KW-1185">Reference proteome</keyword>
<keyword id="KW-0677">Repeat</keyword>
<keyword id="KW-0808">Transferase</keyword>
<keyword id="KW-0812">Transmembrane</keyword>
<keyword id="KW-1133">Transmembrane helix</keyword>
<gene>
    <name evidence="7" type="primary">PMT5</name>
    <name type="ordered locus">CAALFM_CR09770CA</name>
    <name type="ORF">CaO19.7549</name>
</gene>